<keyword id="KW-0002">3D-structure</keyword>
<keyword id="KW-1032">Host cell membrane</keyword>
<keyword id="KW-1043">Host membrane</keyword>
<keyword id="KW-0945">Host-virus interaction</keyword>
<keyword id="KW-0449">Lipoprotein</keyword>
<keyword id="KW-0472">Membrane</keyword>
<keyword id="KW-0519">Myristate</keyword>
<keyword id="KW-0899">Viral immunoevasion</keyword>
<keyword id="KW-0843">Virulence</keyword>
<reference key="1">
    <citation type="journal article" date="1992" name="J. Virol.">
        <title>The nef gene of simian immunodeficiency virus SIVmac1A11.</title>
        <authorList>
            <person name="Unger R.E."/>
            <person name="Marthas M.L."/>
            <person name="Pratt-Lowe E."/>
            <person name="Padrid P.A."/>
            <person name="Luciw P.A."/>
        </authorList>
    </citation>
    <scope>NUCLEOTIDE SEQUENCE</scope>
</reference>
<comment type="function">
    <text evidence="1">Seems to play a role in optimizing the host cell environment for viral replication without causing cell death by apoptosis. Enhances virus infectivity and pathogenicity. Probably involved in viral immune evasion mechanisms (By similarity).</text>
</comment>
<comment type="function">
    <text evidence="1">In infected CD4(+) T-lymphocytes, down-regulates cell surface expression of CD4, CD28, CD3, and MHC-I or MHC-II molecules.</text>
</comment>
<comment type="function">
    <text evidence="1">Interferes with TCR signaling from the cell membrane. Interacts with CD247/TCRZ (TCR zeta chain) and exert potent down-regulation of cell surface TCR/CD3 complexes (By similarity).</text>
</comment>
<comment type="subunit">
    <text evidence="1">Homodimer. Interacts with host CD247/TCRZ; this interaction induces down-regulation of cell surface TCR/CD3 complexes.</text>
</comment>
<comment type="subcellular location">
    <subcellularLocation>
        <location evidence="1">Host cell membrane</location>
        <topology evidence="1">Lipid-anchor</topology>
        <orientation evidence="1">Cytoplasmic side</orientation>
    </subcellularLocation>
    <text evidence="1">Associates with the inner plasma membrane through its N-terminal domain.</text>
</comment>
<comment type="domain">
    <text evidence="1">The N-terminal domain is composed of the N-myristoyl glycine and of a cluster of positively charged amino acids. It is required for inner plasma membrane targeting of Nef (By similarity).</text>
</comment>
<comment type="miscellaneous">
    <text>This is a macaque isolate.</text>
</comment>
<comment type="similarity">
    <text evidence="2">Belongs to the lentivirus primate group Nef protein family.</text>
</comment>
<proteinExistence type="evidence at protein level"/>
<protein>
    <recommendedName>
        <fullName>Protein Nef</fullName>
    </recommendedName>
    <alternativeName>
        <fullName>3'ORF</fullName>
    </alternativeName>
    <alternativeName>
        <fullName>Negative factor</fullName>
        <shortName>F-protein</shortName>
    </alternativeName>
</protein>
<sequence length="263" mass="30620">MGGTISMRRSRSTGDLRQRLLRARGETYERLLGEVEDGSSQSLGELDKGLSSLSCEGQKYNQEQYMNTPWRNPAEEREKLAYRKQNMDDIDEEDDDLVGDTVRPKVPLRTMSYKLAIDMSHFIKEKGGLEGIYYSARRHRILDIYLEKEEGIIPDWQDYTSGPGIRYPKTFGWLWKLVPVNVSDEAQEDEEHYLMHPAQTSQWDDPWGEVPAWKFDPTLAYTYEAYVRYPEEFGSKSGLSEEEVRRRLTARGLLNMADKKETR</sequence>
<organismHost>
    <name type="scientific">Cercopithecidae</name>
    <name type="common">Old World monkeys</name>
    <dbReference type="NCBI Taxonomy" id="9527"/>
</organismHost>
<organism>
    <name type="scientific">Simian immunodeficiency virus (isolate 1A11)</name>
    <name type="common">SIV-mac</name>
    <name type="synonym">Simian immunodeficiency virus rhesus monkey</name>
    <dbReference type="NCBI Taxonomy" id="31682"/>
    <lineage>
        <taxon>Viruses</taxon>
        <taxon>Riboviria</taxon>
        <taxon>Pararnavirae</taxon>
        <taxon>Artverviricota</taxon>
        <taxon>Revtraviricetes</taxon>
        <taxon>Ortervirales</taxon>
        <taxon>Retroviridae</taxon>
        <taxon>Orthoretrovirinae</taxon>
        <taxon>Lentivirus</taxon>
        <taxon>Simian immunodeficiency virus</taxon>
    </lineage>
</organism>
<accession>P31818</accession>
<evidence type="ECO:0000250" key="1"/>
<evidence type="ECO:0000305" key="2"/>
<evidence type="ECO:0007829" key="3">
    <source>
        <dbReference type="PDB" id="3IK5"/>
    </source>
</evidence>
<feature type="initiator methionine" description="Removed; by host" evidence="1">
    <location>
        <position position="1"/>
    </location>
</feature>
<feature type="chain" id="PRO_0000085245" description="Protein Nef">
    <location>
        <begin position="2"/>
        <end position="263"/>
    </location>
</feature>
<feature type="region of interest" description="Acidic">
    <location>
        <begin position="88"/>
        <end position="96"/>
    </location>
</feature>
<feature type="region of interest" description="Mediates dimerization" evidence="1">
    <location>
        <begin position="140"/>
        <end position="156"/>
    </location>
</feature>
<feature type="lipid moiety-binding region" description="N-myristoyl glycine; by host" evidence="1">
    <location>
        <position position="2"/>
    </location>
</feature>
<feature type="helix" evidence="3">
    <location>
        <begin position="113"/>
        <end position="125"/>
    </location>
</feature>
<feature type="helix" evidence="3">
    <location>
        <begin position="136"/>
        <end position="148"/>
    </location>
</feature>
<feature type="strand" evidence="3">
    <location>
        <begin position="163"/>
        <end position="166"/>
    </location>
</feature>
<feature type="strand" evidence="3">
    <location>
        <begin position="168"/>
        <end position="170"/>
    </location>
</feature>
<feature type="strand" evidence="3">
    <location>
        <begin position="175"/>
        <end position="179"/>
    </location>
</feature>
<feature type="strand" evidence="3">
    <location>
        <begin position="211"/>
        <end position="215"/>
    </location>
</feature>
<feature type="helix" evidence="3">
    <location>
        <begin position="217"/>
        <end position="220"/>
    </location>
</feature>
<feature type="helix" evidence="3">
    <location>
        <begin position="224"/>
        <end position="228"/>
    </location>
</feature>
<feature type="helix" evidence="3">
    <location>
        <begin position="230"/>
        <end position="232"/>
    </location>
</feature>
<gene>
    <name type="primary">nef</name>
</gene>
<name>NEF_SIVMA</name>
<dbReference type="PIR" id="A42747">
    <property type="entry name" value="ASLJMA"/>
</dbReference>
<dbReference type="PDB" id="3IK5">
    <property type="method" value="X-ray"/>
    <property type="resolution" value="2.05 A"/>
    <property type="chains" value="A/C=95-235"/>
</dbReference>
<dbReference type="PDBsum" id="3IK5"/>
<dbReference type="SMR" id="P31818"/>
<dbReference type="EvolutionaryTrace" id="P31818"/>
<dbReference type="GO" id="GO:0020002">
    <property type="term" value="C:host cell plasma membrane"/>
    <property type="evidence" value="ECO:0007669"/>
    <property type="project" value="UniProtKB-SubCell"/>
</dbReference>
<dbReference type="GO" id="GO:0016020">
    <property type="term" value="C:membrane"/>
    <property type="evidence" value="ECO:0007669"/>
    <property type="project" value="UniProtKB-KW"/>
</dbReference>
<dbReference type="GO" id="GO:0005525">
    <property type="term" value="F:GTP binding"/>
    <property type="evidence" value="ECO:0007669"/>
    <property type="project" value="InterPro"/>
</dbReference>
<dbReference type="Gene3D" id="3.30.62.10">
    <property type="entry name" value="Nef Regulatory Factor"/>
    <property type="match status" value="1"/>
</dbReference>
<dbReference type="IDEAL" id="IID90022"/>
<dbReference type="InterPro" id="IPR027481">
    <property type="entry name" value="HIV-1_Nef_core_sf"/>
</dbReference>
<dbReference type="InterPro" id="IPR001558">
    <property type="entry name" value="HIV_Nef"/>
</dbReference>
<dbReference type="Pfam" id="PF00469">
    <property type="entry name" value="F-protein"/>
    <property type="match status" value="1"/>
</dbReference>
<dbReference type="SUPFAM" id="SSF55671">
    <property type="entry name" value="Regulatory factor Nef"/>
    <property type="match status" value="1"/>
</dbReference>